<evidence type="ECO:0000255" key="1">
    <source>
        <dbReference type="HAMAP-Rule" id="MF_00033"/>
    </source>
</evidence>
<gene>
    <name evidence="1" type="primary">murG</name>
    <name type="ordered locus">VCM66_2324</name>
</gene>
<dbReference type="EC" id="2.4.1.227" evidence="1"/>
<dbReference type="EMBL" id="CP001233">
    <property type="protein sequence ID" value="ACP06624.1"/>
    <property type="molecule type" value="Genomic_DNA"/>
</dbReference>
<dbReference type="SMR" id="C3LQU6"/>
<dbReference type="CAZy" id="GT28">
    <property type="family name" value="Glycosyltransferase Family 28"/>
</dbReference>
<dbReference type="KEGG" id="vcm:VCM66_2324"/>
<dbReference type="HOGENOM" id="CLU_037404_2_0_6"/>
<dbReference type="UniPathway" id="UPA00219"/>
<dbReference type="Proteomes" id="UP000001217">
    <property type="component" value="Chromosome I"/>
</dbReference>
<dbReference type="GO" id="GO:0005886">
    <property type="term" value="C:plasma membrane"/>
    <property type="evidence" value="ECO:0007669"/>
    <property type="project" value="UniProtKB-SubCell"/>
</dbReference>
<dbReference type="GO" id="GO:0051991">
    <property type="term" value="F:UDP-N-acetyl-D-glucosamine:N-acetylmuramoyl-L-alanyl-D-glutamyl-meso-2,6-diaminopimelyl-D-alanyl-D-alanine-diphosphoundecaprenol 4-beta-N-acetylglucosaminlytransferase activity"/>
    <property type="evidence" value="ECO:0007669"/>
    <property type="project" value="RHEA"/>
</dbReference>
<dbReference type="GO" id="GO:0050511">
    <property type="term" value="F:undecaprenyldiphospho-muramoylpentapeptide beta-N-acetylglucosaminyltransferase activity"/>
    <property type="evidence" value="ECO:0007669"/>
    <property type="project" value="UniProtKB-UniRule"/>
</dbReference>
<dbReference type="GO" id="GO:0005975">
    <property type="term" value="P:carbohydrate metabolic process"/>
    <property type="evidence" value="ECO:0007669"/>
    <property type="project" value="InterPro"/>
</dbReference>
<dbReference type="GO" id="GO:0051301">
    <property type="term" value="P:cell division"/>
    <property type="evidence" value="ECO:0007669"/>
    <property type="project" value="UniProtKB-KW"/>
</dbReference>
<dbReference type="GO" id="GO:0071555">
    <property type="term" value="P:cell wall organization"/>
    <property type="evidence" value="ECO:0007669"/>
    <property type="project" value="UniProtKB-KW"/>
</dbReference>
<dbReference type="GO" id="GO:0030259">
    <property type="term" value="P:lipid glycosylation"/>
    <property type="evidence" value="ECO:0007669"/>
    <property type="project" value="UniProtKB-UniRule"/>
</dbReference>
<dbReference type="GO" id="GO:0009252">
    <property type="term" value="P:peptidoglycan biosynthetic process"/>
    <property type="evidence" value="ECO:0007669"/>
    <property type="project" value="UniProtKB-UniRule"/>
</dbReference>
<dbReference type="GO" id="GO:0008360">
    <property type="term" value="P:regulation of cell shape"/>
    <property type="evidence" value="ECO:0007669"/>
    <property type="project" value="UniProtKB-KW"/>
</dbReference>
<dbReference type="CDD" id="cd03785">
    <property type="entry name" value="GT28_MurG"/>
    <property type="match status" value="1"/>
</dbReference>
<dbReference type="Gene3D" id="3.40.50.2000">
    <property type="entry name" value="Glycogen Phosphorylase B"/>
    <property type="match status" value="2"/>
</dbReference>
<dbReference type="HAMAP" id="MF_00033">
    <property type="entry name" value="MurG"/>
    <property type="match status" value="1"/>
</dbReference>
<dbReference type="InterPro" id="IPR006009">
    <property type="entry name" value="GlcNAc_MurG"/>
</dbReference>
<dbReference type="InterPro" id="IPR007235">
    <property type="entry name" value="Glyco_trans_28_C"/>
</dbReference>
<dbReference type="InterPro" id="IPR004276">
    <property type="entry name" value="GlycoTrans_28_N"/>
</dbReference>
<dbReference type="NCBIfam" id="TIGR01133">
    <property type="entry name" value="murG"/>
    <property type="match status" value="1"/>
</dbReference>
<dbReference type="PANTHER" id="PTHR21015:SF22">
    <property type="entry name" value="GLYCOSYLTRANSFERASE"/>
    <property type="match status" value="1"/>
</dbReference>
<dbReference type="PANTHER" id="PTHR21015">
    <property type="entry name" value="UDP-N-ACETYLGLUCOSAMINE--N-ACETYLMURAMYL-(PENTAPEPTIDE) PYROPHOSPHORYL-UNDECAPRENOL N-ACETYLGLUCOSAMINE TRANSFERASE 1"/>
    <property type="match status" value="1"/>
</dbReference>
<dbReference type="Pfam" id="PF04101">
    <property type="entry name" value="Glyco_tran_28_C"/>
    <property type="match status" value="1"/>
</dbReference>
<dbReference type="Pfam" id="PF03033">
    <property type="entry name" value="Glyco_transf_28"/>
    <property type="match status" value="1"/>
</dbReference>
<dbReference type="SUPFAM" id="SSF53756">
    <property type="entry name" value="UDP-Glycosyltransferase/glycogen phosphorylase"/>
    <property type="match status" value="1"/>
</dbReference>
<reference key="1">
    <citation type="journal article" date="2008" name="PLoS ONE">
        <title>A recalibrated molecular clock and independent origins for the cholera pandemic clones.</title>
        <authorList>
            <person name="Feng L."/>
            <person name="Reeves P.R."/>
            <person name="Lan R."/>
            <person name="Ren Y."/>
            <person name="Gao C."/>
            <person name="Zhou Z."/>
            <person name="Ren Y."/>
            <person name="Cheng J."/>
            <person name="Wang W."/>
            <person name="Wang J."/>
            <person name="Qian W."/>
            <person name="Li D."/>
            <person name="Wang L."/>
        </authorList>
    </citation>
    <scope>NUCLEOTIDE SEQUENCE [LARGE SCALE GENOMIC DNA]</scope>
    <source>
        <strain>M66-2</strain>
    </source>
</reference>
<proteinExistence type="inferred from homology"/>
<protein>
    <recommendedName>
        <fullName evidence="1">UDP-N-acetylglucosamine--N-acetylmuramyl-(pentapeptide) pyrophosphoryl-undecaprenol N-acetylglucosamine transferase</fullName>
        <ecNumber evidence="1">2.4.1.227</ecNumber>
    </recommendedName>
    <alternativeName>
        <fullName evidence="1">Undecaprenyl-PP-MurNAc-pentapeptide-UDPGlcNAc GlcNAc transferase</fullName>
    </alternativeName>
</protein>
<keyword id="KW-0131">Cell cycle</keyword>
<keyword id="KW-0132">Cell division</keyword>
<keyword id="KW-0997">Cell inner membrane</keyword>
<keyword id="KW-1003">Cell membrane</keyword>
<keyword id="KW-0133">Cell shape</keyword>
<keyword id="KW-0961">Cell wall biogenesis/degradation</keyword>
<keyword id="KW-0328">Glycosyltransferase</keyword>
<keyword id="KW-0472">Membrane</keyword>
<keyword id="KW-0573">Peptidoglycan synthesis</keyword>
<keyword id="KW-0808">Transferase</keyword>
<feature type="chain" id="PRO_1000117037" description="UDP-N-acetylglucosamine--N-acetylmuramyl-(pentapeptide) pyrophosphoryl-undecaprenol N-acetylglucosamine transferase">
    <location>
        <begin position="1"/>
        <end position="354"/>
    </location>
</feature>
<feature type="binding site" evidence="1">
    <location>
        <begin position="15"/>
        <end position="17"/>
    </location>
    <ligand>
        <name>UDP-N-acetyl-alpha-D-glucosamine</name>
        <dbReference type="ChEBI" id="CHEBI:57705"/>
    </ligand>
</feature>
<feature type="binding site" evidence="1">
    <location>
        <position position="127"/>
    </location>
    <ligand>
        <name>UDP-N-acetyl-alpha-D-glucosamine</name>
        <dbReference type="ChEBI" id="CHEBI:57705"/>
    </ligand>
</feature>
<feature type="binding site" evidence="1">
    <location>
        <position position="163"/>
    </location>
    <ligand>
        <name>UDP-N-acetyl-alpha-D-glucosamine</name>
        <dbReference type="ChEBI" id="CHEBI:57705"/>
    </ligand>
</feature>
<feature type="binding site" evidence="1">
    <location>
        <position position="191"/>
    </location>
    <ligand>
        <name>UDP-N-acetyl-alpha-D-glucosamine</name>
        <dbReference type="ChEBI" id="CHEBI:57705"/>
    </ligand>
</feature>
<feature type="binding site" evidence="1">
    <location>
        <position position="244"/>
    </location>
    <ligand>
        <name>UDP-N-acetyl-alpha-D-glucosamine</name>
        <dbReference type="ChEBI" id="CHEBI:57705"/>
    </ligand>
</feature>
<feature type="binding site" evidence="1">
    <location>
        <begin position="263"/>
        <end position="268"/>
    </location>
    <ligand>
        <name>UDP-N-acetyl-alpha-D-glucosamine</name>
        <dbReference type="ChEBI" id="CHEBI:57705"/>
    </ligand>
</feature>
<feature type="binding site" evidence="1">
    <location>
        <position position="288"/>
    </location>
    <ligand>
        <name>UDP-N-acetyl-alpha-D-glucosamine</name>
        <dbReference type="ChEBI" id="CHEBI:57705"/>
    </ligand>
</feature>
<comment type="function">
    <text evidence="1">Cell wall formation. Catalyzes the transfer of a GlcNAc subunit on undecaprenyl-pyrophosphoryl-MurNAc-pentapeptide (lipid intermediate I) to form undecaprenyl-pyrophosphoryl-MurNAc-(pentapeptide)GlcNAc (lipid intermediate II).</text>
</comment>
<comment type="catalytic activity">
    <reaction evidence="1">
        <text>di-trans,octa-cis-undecaprenyl diphospho-N-acetyl-alpha-D-muramoyl-L-alanyl-D-glutamyl-meso-2,6-diaminopimeloyl-D-alanyl-D-alanine + UDP-N-acetyl-alpha-D-glucosamine = di-trans,octa-cis-undecaprenyl diphospho-[N-acetyl-alpha-D-glucosaminyl-(1-&gt;4)]-N-acetyl-alpha-D-muramoyl-L-alanyl-D-glutamyl-meso-2,6-diaminopimeloyl-D-alanyl-D-alanine + UDP + H(+)</text>
        <dbReference type="Rhea" id="RHEA:31227"/>
        <dbReference type="ChEBI" id="CHEBI:15378"/>
        <dbReference type="ChEBI" id="CHEBI:57705"/>
        <dbReference type="ChEBI" id="CHEBI:58223"/>
        <dbReference type="ChEBI" id="CHEBI:61387"/>
        <dbReference type="ChEBI" id="CHEBI:61388"/>
        <dbReference type="EC" id="2.4.1.227"/>
    </reaction>
</comment>
<comment type="pathway">
    <text evidence="1">Cell wall biogenesis; peptidoglycan biosynthesis.</text>
</comment>
<comment type="subcellular location">
    <subcellularLocation>
        <location evidence="1">Cell inner membrane</location>
        <topology evidence="1">Peripheral membrane protein</topology>
        <orientation evidence="1">Cytoplasmic side</orientation>
    </subcellularLocation>
</comment>
<comment type="similarity">
    <text evidence="1">Belongs to the glycosyltransferase 28 family. MurG subfamily.</text>
</comment>
<sequence length="354" mass="37983">MMNKNKKLMVMAGGTGGHVFPGLAVAKQLQQQGWQIRWLGTADRMEAELVPKHGIEIDFIQVKGLRGQGLMRLLKAPFQIVNAILQARRHLLTYQPDAVLGMGGYVSGPGGIAAWLLGIPVVLHEQNAVAGLTNQWLAKIARRVFQAFPGAFADASVVGNPVRQDVVQLAAPEQRFATRNGAIRILVMGGSQGARILNQTLPAVMAALGEGYEIRHQAGKNSQQDVAEAYAAAGVESAQVTEFIDDVADAYAWADLLICRSGALTVSEVSAAGVGAIFIPFMHKDRQQALNADHLVACGAAKMIEQPELSVEKLTQMVRELDRAQLLSMAQKARQAAKLDADKVVAQAIIAITE</sequence>
<accession>C3LQU6</accession>
<organism>
    <name type="scientific">Vibrio cholerae serotype O1 (strain M66-2)</name>
    <dbReference type="NCBI Taxonomy" id="579112"/>
    <lineage>
        <taxon>Bacteria</taxon>
        <taxon>Pseudomonadati</taxon>
        <taxon>Pseudomonadota</taxon>
        <taxon>Gammaproteobacteria</taxon>
        <taxon>Vibrionales</taxon>
        <taxon>Vibrionaceae</taxon>
        <taxon>Vibrio</taxon>
    </lineage>
</organism>
<name>MURG_VIBCM</name>